<keyword id="KW-0963">Cytoplasm</keyword>
<keyword id="KW-0489">Methyltransferase</keyword>
<keyword id="KW-0694">RNA-binding</keyword>
<keyword id="KW-0698">rRNA processing</keyword>
<keyword id="KW-0949">S-adenosyl-L-methionine</keyword>
<keyword id="KW-0808">Transferase</keyword>
<sequence>MKNTYNLRSIAAKAISQVLDQGQSLSAVLPELQKNISDKDRALLQELCFGTLRVLPQLEWCIQQLMARPMTGKQRVFHYLIMVGLYQLIYTRIPPHAALAETVEGATVLKRPQLKGLINGVLRQFQRQQVELLERAVNNDSHYLHPSWLLARIKQAYPAQWQQILDANNQRPPMWLRVNRLHHSRSEYLELLTQADINAEPHPIYRDAVRLITPCAVNHLPGFELGWVTVQDASAQGCVDLLDPQNGEQILDLCAAPGGKTTHILEAAPKAHVLAVDIDEQRLSRVKENLQRLQLQAVVRVGDGRAPDTWCGDQQFDRILLDAPCSATGVIRRHPDIKWLRRDRDISELAQLQSEIIEAIWPKLKHGGVLVYATCSILPEENQQQIAAFLQRHPEAQLTETGTTAAPGKQNLPHPEDGDGFFYAKIIKK</sequence>
<protein>
    <recommendedName>
        <fullName evidence="1">Ribosomal RNA small subunit methyltransferase B</fullName>
        <ecNumber evidence="1">2.1.1.176</ecNumber>
    </recommendedName>
    <alternativeName>
        <fullName evidence="1">16S rRNA m5C967 methyltransferase</fullName>
    </alternativeName>
    <alternativeName>
        <fullName evidence="1">rRNA (cytosine-C(5)-)-methyltransferase RsmB</fullName>
    </alternativeName>
</protein>
<feature type="chain" id="PRO_0000366188" description="Ribosomal RNA small subunit methyltransferase B">
    <location>
        <begin position="1"/>
        <end position="429"/>
    </location>
</feature>
<feature type="active site" description="Nucleophile" evidence="1">
    <location>
        <position position="375"/>
    </location>
</feature>
<feature type="binding site" evidence="1">
    <location>
        <begin position="254"/>
        <end position="260"/>
    </location>
    <ligand>
        <name>S-adenosyl-L-methionine</name>
        <dbReference type="ChEBI" id="CHEBI:59789"/>
    </ligand>
</feature>
<feature type="binding site" evidence="1">
    <location>
        <position position="277"/>
    </location>
    <ligand>
        <name>S-adenosyl-L-methionine</name>
        <dbReference type="ChEBI" id="CHEBI:59789"/>
    </ligand>
</feature>
<feature type="binding site" evidence="1">
    <location>
        <position position="303"/>
    </location>
    <ligand>
        <name>S-adenosyl-L-methionine</name>
        <dbReference type="ChEBI" id="CHEBI:59789"/>
    </ligand>
</feature>
<feature type="binding site" evidence="1">
    <location>
        <position position="322"/>
    </location>
    <ligand>
        <name>S-adenosyl-L-methionine</name>
        <dbReference type="ChEBI" id="CHEBI:59789"/>
    </ligand>
</feature>
<accession>B2K506</accession>
<organism>
    <name type="scientific">Yersinia pseudotuberculosis serotype IB (strain PB1/+)</name>
    <dbReference type="NCBI Taxonomy" id="502801"/>
    <lineage>
        <taxon>Bacteria</taxon>
        <taxon>Pseudomonadati</taxon>
        <taxon>Pseudomonadota</taxon>
        <taxon>Gammaproteobacteria</taxon>
        <taxon>Enterobacterales</taxon>
        <taxon>Yersiniaceae</taxon>
        <taxon>Yersinia</taxon>
    </lineage>
</organism>
<comment type="function">
    <text evidence="1">Specifically methylates the cytosine at position 967 (m5C967) of 16S rRNA.</text>
</comment>
<comment type="catalytic activity">
    <reaction evidence="1">
        <text>cytidine(967) in 16S rRNA + S-adenosyl-L-methionine = 5-methylcytidine(967) in 16S rRNA + S-adenosyl-L-homocysteine + H(+)</text>
        <dbReference type="Rhea" id="RHEA:42748"/>
        <dbReference type="Rhea" id="RHEA-COMP:10219"/>
        <dbReference type="Rhea" id="RHEA-COMP:10220"/>
        <dbReference type="ChEBI" id="CHEBI:15378"/>
        <dbReference type="ChEBI" id="CHEBI:57856"/>
        <dbReference type="ChEBI" id="CHEBI:59789"/>
        <dbReference type="ChEBI" id="CHEBI:74483"/>
        <dbReference type="ChEBI" id="CHEBI:82748"/>
        <dbReference type="EC" id="2.1.1.176"/>
    </reaction>
</comment>
<comment type="subcellular location">
    <subcellularLocation>
        <location evidence="1">Cytoplasm</location>
    </subcellularLocation>
</comment>
<comment type="similarity">
    <text evidence="1">Belongs to the class I-like SAM-binding methyltransferase superfamily. RsmB/NOP family.</text>
</comment>
<evidence type="ECO:0000255" key="1">
    <source>
        <dbReference type="HAMAP-Rule" id="MF_01856"/>
    </source>
</evidence>
<proteinExistence type="inferred from homology"/>
<dbReference type="EC" id="2.1.1.176" evidence="1"/>
<dbReference type="EMBL" id="CP001048">
    <property type="protein sequence ID" value="ACC90808.1"/>
    <property type="molecule type" value="Genomic_DNA"/>
</dbReference>
<dbReference type="RefSeq" id="WP_002215705.1">
    <property type="nucleotide sequence ID" value="NZ_CP009780.1"/>
</dbReference>
<dbReference type="SMR" id="B2K506"/>
<dbReference type="GeneID" id="57974364"/>
<dbReference type="KEGG" id="ypb:YPTS_3859"/>
<dbReference type="PATRIC" id="fig|502801.10.peg.3324"/>
<dbReference type="GO" id="GO:0005829">
    <property type="term" value="C:cytosol"/>
    <property type="evidence" value="ECO:0007669"/>
    <property type="project" value="TreeGrafter"/>
</dbReference>
<dbReference type="GO" id="GO:0003723">
    <property type="term" value="F:RNA binding"/>
    <property type="evidence" value="ECO:0007669"/>
    <property type="project" value="UniProtKB-KW"/>
</dbReference>
<dbReference type="GO" id="GO:0009383">
    <property type="term" value="F:rRNA (cytosine-C5-)-methyltransferase activity"/>
    <property type="evidence" value="ECO:0007669"/>
    <property type="project" value="TreeGrafter"/>
</dbReference>
<dbReference type="GO" id="GO:0006355">
    <property type="term" value="P:regulation of DNA-templated transcription"/>
    <property type="evidence" value="ECO:0007669"/>
    <property type="project" value="InterPro"/>
</dbReference>
<dbReference type="GO" id="GO:0070475">
    <property type="term" value="P:rRNA base methylation"/>
    <property type="evidence" value="ECO:0007669"/>
    <property type="project" value="TreeGrafter"/>
</dbReference>
<dbReference type="CDD" id="cd02440">
    <property type="entry name" value="AdoMet_MTases"/>
    <property type="match status" value="1"/>
</dbReference>
<dbReference type="CDD" id="cd00620">
    <property type="entry name" value="Methyltransferase_Sun"/>
    <property type="match status" value="1"/>
</dbReference>
<dbReference type="FunFam" id="1.10.287.730:FF:000001">
    <property type="entry name" value="Ribosomal RNA small subunit methyltransferase B"/>
    <property type="match status" value="1"/>
</dbReference>
<dbReference type="FunFam" id="1.10.940.10:FF:000002">
    <property type="entry name" value="Ribosomal RNA small subunit methyltransferase B"/>
    <property type="match status" value="1"/>
</dbReference>
<dbReference type="FunFam" id="3.30.70.1170:FF:000002">
    <property type="entry name" value="Ribosomal RNA small subunit methyltransferase B"/>
    <property type="match status" value="1"/>
</dbReference>
<dbReference type="FunFam" id="3.40.50.150:FF:000022">
    <property type="entry name" value="Ribosomal RNA small subunit methyltransferase B"/>
    <property type="match status" value="1"/>
</dbReference>
<dbReference type="Gene3D" id="1.10.287.730">
    <property type="entry name" value="Helix hairpin bin"/>
    <property type="match status" value="1"/>
</dbReference>
<dbReference type="Gene3D" id="1.10.940.10">
    <property type="entry name" value="NusB-like"/>
    <property type="match status" value="1"/>
</dbReference>
<dbReference type="Gene3D" id="3.30.70.1170">
    <property type="entry name" value="Sun protein, domain 3"/>
    <property type="match status" value="1"/>
</dbReference>
<dbReference type="Gene3D" id="3.40.50.150">
    <property type="entry name" value="Vaccinia Virus protein VP39"/>
    <property type="match status" value="1"/>
</dbReference>
<dbReference type="HAMAP" id="MF_01856">
    <property type="entry name" value="16SrRNA_methyltr_B"/>
    <property type="match status" value="1"/>
</dbReference>
<dbReference type="InterPro" id="IPR049560">
    <property type="entry name" value="MeTrfase_RsmB-F_NOP2_cat"/>
</dbReference>
<dbReference type="InterPro" id="IPR001678">
    <property type="entry name" value="MeTrfase_RsmB-F_NOP2_dom"/>
</dbReference>
<dbReference type="InterPro" id="IPR035926">
    <property type="entry name" value="NusB-like_sf"/>
</dbReference>
<dbReference type="InterPro" id="IPR006027">
    <property type="entry name" value="NusB_RsmB_TIM44"/>
</dbReference>
<dbReference type="InterPro" id="IPR023267">
    <property type="entry name" value="RCMT"/>
</dbReference>
<dbReference type="InterPro" id="IPR004573">
    <property type="entry name" value="rRNA_ssu_MeTfrase_B"/>
</dbReference>
<dbReference type="InterPro" id="IPR023541">
    <property type="entry name" value="rRNA_ssu_MeTfrase_B_ent"/>
</dbReference>
<dbReference type="InterPro" id="IPR054728">
    <property type="entry name" value="RsmB-like_ferredoxin"/>
</dbReference>
<dbReference type="InterPro" id="IPR048019">
    <property type="entry name" value="RsmB-like_N"/>
</dbReference>
<dbReference type="InterPro" id="IPR018314">
    <property type="entry name" value="RsmB/NOL1/NOP2-like_CS"/>
</dbReference>
<dbReference type="InterPro" id="IPR029063">
    <property type="entry name" value="SAM-dependent_MTases_sf"/>
</dbReference>
<dbReference type="NCBIfam" id="NF008149">
    <property type="entry name" value="PRK10901.1"/>
    <property type="match status" value="1"/>
</dbReference>
<dbReference type="NCBIfam" id="NF011494">
    <property type="entry name" value="PRK14902.1"/>
    <property type="match status" value="1"/>
</dbReference>
<dbReference type="NCBIfam" id="TIGR00563">
    <property type="entry name" value="rsmB"/>
    <property type="match status" value="1"/>
</dbReference>
<dbReference type="PANTHER" id="PTHR22807:SF61">
    <property type="entry name" value="NOL1_NOP2_SUN FAMILY PROTEIN _ ANTITERMINATION NUSB DOMAIN-CONTAINING PROTEIN"/>
    <property type="match status" value="1"/>
</dbReference>
<dbReference type="PANTHER" id="PTHR22807">
    <property type="entry name" value="NOP2 YEAST -RELATED NOL1/NOP2/FMU SUN DOMAIN-CONTAINING"/>
    <property type="match status" value="1"/>
</dbReference>
<dbReference type="Pfam" id="PF01189">
    <property type="entry name" value="Methyltr_RsmB-F"/>
    <property type="match status" value="1"/>
</dbReference>
<dbReference type="Pfam" id="PF01029">
    <property type="entry name" value="NusB"/>
    <property type="match status" value="1"/>
</dbReference>
<dbReference type="Pfam" id="PF22458">
    <property type="entry name" value="RsmF-B_ferredox"/>
    <property type="match status" value="1"/>
</dbReference>
<dbReference type="PRINTS" id="PR02008">
    <property type="entry name" value="RCMTFAMILY"/>
</dbReference>
<dbReference type="SUPFAM" id="SSF48013">
    <property type="entry name" value="NusB-like"/>
    <property type="match status" value="1"/>
</dbReference>
<dbReference type="SUPFAM" id="SSF53335">
    <property type="entry name" value="S-adenosyl-L-methionine-dependent methyltransferases"/>
    <property type="match status" value="1"/>
</dbReference>
<dbReference type="PROSITE" id="PS01153">
    <property type="entry name" value="NOL1_NOP2_SUN"/>
    <property type="match status" value="1"/>
</dbReference>
<dbReference type="PROSITE" id="PS51686">
    <property type="entry name" value="SAM_MT_RSMB_NOP"/>
    <property type="match status" value="1"/>
</dbReference>
<name>RSMB_YERPB</name>
<gene>
    <name evidence="1" type="primary">rsmB</name>
    <name evidence="1" type="synonym">sun</name>
    <name type="ordered locus">YPTS_3859</name>
</gene>
<reference key="1">
    <citation type="submission" date="2008-04" db="EMBL/GenBank/DDBJ databases">
        <title>Complete sequence of Yersinia pseudotuberculosis PB1/+.</title>
        <authorList>
            <person name="Copeland A."/>
            <person name="Lucas S."/>
            <person name="Lapidus A."/>
            <person name="Glavina del Rio T."/>
            <person name="Dalin E."/>
            <person name="Tice H."/>
            <person name="Bruce D."/>
            <person name="Goodwin L."/>
            <person name="Pitluck S."/>
            <person name="Munk A.C."/>
            <person name="Brettin T."/>
            <person name="Detter J.C."/>
            <person name="Han C."/>
            <person name="Tapia R."/>
            <person name="Schmutz J."/>
            <person name="Larimer F."/>
            <person name="Land M."/>
            <person name="Hauser L."/>
            <person name="Challacombe J.F."/>
            <person name="Green L."/>
            <person name="Lindler L.E."/>
            <person name="Nikolich M.P."/>
            <person name="Richardson P."/>
        </authorList>
    </citation>
    <scope>NUCLEOTIDE SEQUENCE [LARGE SCALE GENOMIC DNA]</scope>
    <source>
        <strain>PB1/+</strain>
    </source>
</reference>